<geneLocation type="chloroplast"/>
<sequence>MSRRSTAEKETAKSDPIYRNRLVNMLVNRILRHGKKSLAYRILYRAMKNIQQKTEKNPLSVLRQAIRGVTPNVTVKARRVGGSTYQVPVEIRSTQGKALAIRWLLGASRKRPPGRNMAFKLSYELMDAARGNGNAIRKKEETHRMAEANRAFAHFR</sequence>
<name>RR7_CYCRE</name>
<evidence type="ECO:0000250" key="1"/>
<evidence type="ECO:0000305" key="2"/>
<protein>
    <recommendedName>
        <fullName evidence="2">Small ribosomal subunit protein uS7c</fullName>
    </recommendedName>
    <alternativeName>
        <fullName>30S ribosomal protein S7, chloroplastic</fullName>
    </alternativeName>
</protein>
<gene>
    <name type="primary">rps7</name>
</gene>
<dbReference type="EMBL" id="AF469733">
    <property type="protein sequence ID" value="AAQ05271.1"/>
    <property type="molecule type" value="Genomic_DNA"/>
</dbReference>
<dbReference type="RefSeq" id="YP_007474608.1">
    <property type="nucleotide sequence ID" value="NC_020319.1"/>
</dbReference>
<dbReference type="RefSeq" id="YP_007474685.1">
    <property type="nucleotide sequence ID" value="NC_020319.1"/>
</dbReference>
<dbReference type="SMR" id="Q71L33"/>
<dbReference type="GeneID" id="14657428"/>
<dbReference type="GeneID" id="14657531"/>
<dbReference type="GO" id="GO:0009507">
    <property type="term" value="C:chloroplast"/>
    <property type="evidence" value="ECO:0007669"/>
    <property type="project" value="UniProtKB-SubCell"/>
</dbReference>
<dbReference type="GO" id="GO:0015935">
    <property type="term" value="C:small ribosomal subunit"/>
    <property type="evidence" value="ECO:0007669"/>
    <property type="project" value="InterPro"/>
</dbReference>
<dbReference type="GO" id="GO:0019843">
    <property type="term" value="F:rRNA binding"/>
    <property type="evidence" value="ECO:0007669"/>
    <property type="project" value="UniProtKB-UniRule"/>
</dbReference>
<dbReference type="GO" id="GO:0003735">
    <property type="term" value="F:structural constituent of ribosome"/>
    <property type="evidence" value="ECO:0007669"/>
    <property type="project" value="InterPro"/>
</dbReference>
<dbReference type="GO" id="GO:0006412">
    <property type="term" value="P:translation"/>
    <property type="evidence" value="ECO:0007669"/>
    <property type="project" value="UniProtKB-UniRule"/>
</dbReference>
<dbReference type="CDD" id="cd14871">
    <property type="entry name" value="uS7_Chloroplast"/>
    <property type="match status" value="1"/>
</dbReference>
<dbReference type="FunFam" id="1.10.455.10:FF:000001">
    <property type="entry name" value="30S ribosomal protein S7"/>
    <property type="match status" value="1"/>
</dbReference>
<dbReference type="Gene3D" id="1.10.455.10">
    <property type="entry name" value="Ribosomal protein S7 domain"/>
    <property type="match status" value="1"/>
</dbReference>
<dbReference type="HAMAP" id="MF_00480_B">
    <property type="entry name" value="Ribosomal_uS7_B"/>
    <property type="match status" value="1"/>
</dbReference>
<dbReference type="InterPro" id="IPR000235">
    <property type="entry name" value="Ribosomal_uS7"/>
</dbReference>
<dbReference type="InterPro" id="IPR005717">
    <property type="entry name" value="Ribosomal_uS7_bac/org-type"/>
</dbReference>
<dbReference type="InterPro" id="IPR020606">
    <property type="entry name" value="Ribosomal_uS7_CS"/>
</dbReference>
<dbReference type="InterPro" id="IPR023798">
    <property type="entry name" value="Ribosomal_uS7_dom"/>
</dbReference>
<dbReference type="InterPro" id="IPR036823">
    <property type="entry name" value="Ribosomal_uS7_dom_sf"/>
</dbReference>
<dbReference type="NCBIfam" id="TIGR01029">
    <property type="entry name" value="rpsG_bact"/>
    <property type="match status" value="1"/>
</dbReference>
<dbReference type="PANTHER" id="PTHR11205">
    <property type="entry name" value="RIBOSOMAL PROTEIN S7"/>
    <property type="match status" value="1"/>
</dbReference>
<dbReference type="Pfam" id="PF00177">
    <property type="entry name" value="Ribosomal_S7"/>
    <property type="match status" value="1"/>
</dbReference>
<dbReference type="PIRSF" id="PIRSF002122">
    <property type="entry name" value="RPS7p_RPS7a_RPS5e_RPS7o"/>
    <property type="match status" value="1"/>
</dbReference>
<dbReference type="SUPFAM" id="SSF47973">
    <property type="entry name" value="Ribosomal protein S7"/>
    <property type="match status" value="1"/>
</dbReference>
<dbReference type="PROSITE" id="PS00052">
    <property type="entry name" value="RIBOSOMAL_S7"/>
    <property type="match status" value="1"/>
</dbReference>
<organism>
    <name type="scientific">Cycas revoluta</name>
    <name type="common">Sago palm</name>
    <dbReference type="NCBI Taxonomy" id="3396"/>
    <lineage>
        <taxon>Eukaryota</taxon>
        <taxon>Viridiplantae</taxon>
        <taxon>Streptophyta</taxon>
        <taxon>Embryophyta</taxon>
        <taxon>Tracheophyta</taxon>
        <taxon>Spermatophyta</taxon>
        <taxon>Cycadidae</taxon>
        <taxon>Cycadales</taxon>
        <taxon>Cycadaceae</taxon>
        <taxon>Cycas</taxon>
    </lineage>
</organism>
<accession>Q71L33</accession>
<feature type="chain" id="PRO_0000124450" description="Small ribosomal subunit protein uS7c">
    <location>
        <begin position="1"/>
        <end position="156"/>
    </location>
</feature>
<reference key="1">
    <citation type="journal article" date="2003" name="Mol. Phylogenet. Evol.">
        <title>Inference of higher-order relationships in the cycads from a large chloroplast data set.</title>
        <authorList>
            <person name="Rai H.S."/>
            <person name="O'Brien H.E."/>
            <person name="Reeves P.A."/>
            <person name="Olmstead R.G."/>
            <person name="Graham S.W."/>
        </authorList>
    </citation>
    <scope>NUCLEOTIDE SEQUENCE [GENOMIC DNA]</scope>
</reference>
<comment type="function">
    <text evidence="1">One of the primary rRNA binding proteins, it binds directly to 16S rRNA where it nucleates assembly of the head domain of the 30S subunit.</text>
</comment>
<comment type="subunit">
    <text>Part of the 30S ribosomal subunit.</text>
</comment>
<comment type="subcellular location">
    <subcellularLocation>
        <location>Plastid</location>
        <location>Chloroplast</location>
    </subcellularLocation>
</comment>
<comment type="similarity">
    <text evidence="2">Belongs to the universal ribosomal protein uS7 family.</text>
</comment>
<keyword id="KW-0150">Chloroplast</keyword>
<keyword id="KW-0934">Plastid</keyword>
<keyword id="KW-0687">Ribonucleoprotein</keyword>
<keyword id="KW-0689">Ribosomal protein</keyword>
<keyword id="KW-0694">RNA-binding</keyword>
<keyword id="KW-0699">rRNA-binding</keyword>
<proteinExistence type="inferred from homology"/>